<feature type="chain" id="PRO_0000167509" description="Ribosome-recycling factor">
    <location>
        <begin position="1"/>
        <end position="187"/>
    </location>
</feature>
<evidence type="ECO:0000255" key="1">
    <source>
        <dbReference type="HAMAP-Rule" id="MF_00040"/>
    </source>
</evidence>
<comment type="function">
    <text evidence="1">Responsible for the release of ribosomes from messenger RNA at the termination of protein biosynthesis. May increase the efficiency of translation by recycling ribosomes from one round of translation to another.</text>
</comment>
<comment type="subcellular location">
    <subcellularLocation>
        <location evidence="1">Cytoplasm</location>
    </subcellularLocation>
</comment>
<comment type="similarity">
    <text evidence="1">Belongs to the RRF family.</text>
</comment>
<accession>Q8L1H5</accession>
<dbReference type="EMBL" id="AJ431698">
    <property type="protein sequence ID" value="CAD24430.1"/>
    <property type="molecule type" value="Genomic_DNA"/>
</dbReference>
<dbReference type="SMR" id="Q8L1H5"/>
<dbReference type="GO" id="GO:0005829">
    <property type="term" value="C:cytosol"/>
    <property type="evidence" value="ECO:0007669"/>
    <property type="project" value="GOC"/>
</dbReference>
<dbReference type="GO" id="GO:0043023">
    <property type="term" value="F:ribosomal large subunit binding"/>
    <property type="evidence" value="ECO:0007669"/>
    <property type="project" value="TreeGrafter"/>
</dbReference>
<dbReference type="GO" id="GO:0002184">
    <property type="term" value="P:cytoplasmic translational termination"/>
    <property type="evidence" value="ECO:0007669"/>
    <property type="project" value="TreeGrafter"/>
</dbReference>
<dbReference type="CDD" id="cd00520">
    <property type="entry name" value="RRF"/>
    <property type="match status" value="1"/>
</dbReference>
<dbReference type="FunFam" id="1.10.132.20:FF:000001">
    <property type="entry name" value="Ribosome-recycling factor"/>
    <property type="match status" value="1"/>
</dbReference>
<dbReference type="FunFam" id="3.30.1360.40:FF:000001">
    <property type="entry name" value="Ribosome-recycling factor"/>
    <property type="match status" value="1"/>
</dbReference>
<dbReference type="Gene3D" id="3.30.1360.40">
    <property type="match status" value="1"/>
</dbReference>
<dbReference type="Gene3D" id="1.10.132.20">
    <property type="entry name" value="Ribosome-recycling factor"/>
    <property type="match status" value="1"/>
</dbReference>
<dbReference type="HAMAP" id="MF_00040">
    <property type="entry name" value="RRF"/>
    <property type="match status" value="1"/>
</dbReference>
<dbReference type="InterPro" id="IPR002661">
    <property type="entry name" value="Ribosome_recyc_fac"/>
</dbReference>
<dbReference type="InterPro" id="IPR023584">
    <property type="entry name" value="Ribosome_recyc_fac_dom"/>
</dbReference>
<dbReference type="InterPro" id="IPR036191">
    <property type="entry name" value="RRF_sf"/>
</dbReference>
<dbReference type="NCBIfam" id="TIGR00496">
    <property type="entry name" value="frr"/>
    <property type="match status" value="1"/>
</dbReference>
<dbReference type="PANTHER" id="PTHR20982:SF3">
    <property type="entry name" value="MITOCHONDRIAL RIBOSOME RECYCLING FACTOR PSEUDO 1"/>
    <property type="match status" value="1"/>
</dbReference>
<dbReference type="PANTHER" id="PTHR20982">
    <property type="entry name" value="RIBOSOME RECYCLING FACTOR"/>
    <property type="match status" value="1"/>
</dbReference>
<dbReference type="Pfam" id="PF01765">
    <property type="entry name" value="RRF"/>
    <property type="match status" value="1"/>
</dbReference>
<dbReference type="SUPFAM" id="SSF55194">
    <property type="entry name" value="Ribosome recycling factor, RRF"/>
    <property type="match status" value="1"/>
</dbReference>
<organism>
    <name type="scientific">Paracoccus zeaxanthinifaciens</name>
    <dbReference type="NCBI Taxonomy" id="187400"/>
    <lineage>
        <taxon>Bacteria</taxon>
        <taxon>Pseudomonadati</taxon>
        <taxon>Pseudomonadota</taxon>
        <taxon>Alphaproteobacteria</taxon>
        <taxon>Rhodobacterales</taxon>
        <taxon>Paracoccaceae</taxon>
        <taxon>Paracoccus</taxon>
    </lineage>
</organism>
<sequence length="187" mass="20878">MAEDIEIDLDDLERRMKGAMDSLRAEFASLRTGRASASMVEPVQVEAYGQMTPINQVGTVNVPEPRMVTINVWDKGMVGKVEKAIRESGLGINPQTNGTIIMLPIPELNEERRRELTKVAAQYAEHARVAIRNVRRDGMDQIKKGKANGMPEDDQKFWETAVQELTDKSIGNVDQALEAKQAEIMQV</sequence>
<keyword id="KW-0963">Cytoplasm</keyword>
<keyword id="KW-0648">Protein biosynthesis</keyword>
<gene>
    <name evidence="1" type="primary">frr</name>
    <name type="synonym">rrf</name>
</gene>
<name>RRF_PARZE</name>
<protein>
    <recommendedName>
        <fullName evidence="1">Ribosome-recycling factor</fullName>
        <shortName evidence="1">RRF</shortName>
    </recommendedName>
    <alternativeName>
        <fullName evidence="1">Ribosome-releasing factor</fullName>
    </alternativeName>
</protein>
<reference key="1">
    <citation type="submission" date="2002-02" db="EMBL/GenBank/DDBJ databases">
        <title>Genetics of isoprenoid biosynthesis in Paracoccus zeaxanthinifaciens.</title>
        <authorList>
            <person name="Huembelin M."/>
        </authorList>
    </citation>
    <scope>NUCLEOTIDE SEQUENCE [GENOMIC DNA]</scope>
    <source>
        <strain>R114</strain>
    </source>
</reference>
<proteinExistence type="inferred from homology"/>